<sequence>MLWRNEITEFMDQLSKYSQEILKTFKQLRPSEYKQYNEFLTQVTPLLQKTPEKIPELVDHIFNYLDNVEKICELLVNASSIIISSKIREQVKHGMSFSYKADLDSLADILSQKQYVLMHLSKNIAAQYFNTCLNQGKSKLDLKAASVFYSSRPRTASSAELYRKMLYAYGSPQEINYYTEKARNKTLDVEENDSMAIIERTARHNLSLMHPLEAMGLTFGATNTDADPEDLKDKTVINLTLPQATESITYHLKSLMQLKKVSTASGLNTNILKAFDNIISTPVKKNKMASKLAPGMDVVFTSDNGKTFFTKNILSKNMLAGPKERVFAYNNLISNLNNSCFIQNHNDFLRQQDSWPFYDAHNFTNKFLMQPIFSGQTRPRLQGAMEAAHVETHLTAFLQSIQPSRPQDPSVLASPKLSALILN</sequence>
<gene>
    <name type="ordered locus">Pret-139</name>
</gene>
<dbReference type="EMBL" id="AY261363">
    <property type="status" value="NOT_ANNOTATED_CDS"/>
    <property type="molecule type" value="Genomic_DNA"/>
</dbReference>
<dbReference type="SMR" id="P0CAH1"/>
<dbReference type="Proteomes" id="UP000000859">
    <property type="component" value="Segment"/>
</dbReference>
<dbReference type="GO" id="GO:0044423">
    <property type="term" value="C:virion component"/>
    <property type="evidence" value="ECO:0007669"/>
    <property type="project" value="UniProtKB-KW"/>
</dbReference>
<organism>
    <name type="scientific">African swine fever virus (isolate Tick/South Africa/Pretoriuskop Pr4/1996)</name>
    <name type="common">ASFV</name>
    <dbReference type="NCBI Taxonomy" id="561443"/>
    <lineage>
        <taxon>Viruses</taxon>
        <taxon>Varidnaviria</taxon>
        <taxon>Bamfordvirae</taxon>
        <taxon>Nucleocytoviricota</taxon>
        <taxon>Pokkesviricetes</taxon>
        <taxon>Asfuvirales</taxon>
        <taxon>Asfarviridae</taxon>
        <taxon>Asfivirus</taxon>
        <taxon>African swine fever virus</taxon>
    </lineage>
</organism>
<reference key="1">
    <citation type="submission" date="2003-03" db="EMBL/GenBank/DDBJ databases">
        <title>African swine fever virus genomes.</title>
        <authorList>
            <person name="Kutish G.F."/>
            <person name="Rock D.L."/>
        </authorList>
    </citation>
    <scope>NUCLEOTIDE SEQUENCE [GENOMIC DNA]</scope>
</reference>
<proteinExistence type="inferred from homology"/>
<protein>
    <recommendedName>
        <fullName>Uncharacterized protein E423R</fullName>
        <shortName>pE423R</shortName>
    </recommendedName>
</protein>
<name>VF423_ASFP4</name>
<evidence type="ECO:0000250" key="1">
    <source>
        <dbReference type="UniProtKB" id="Q65195"/>
    </source>
</evidence>
<evidence type="ECO:0000305" key="2"/>
<organismHost>
    <name type="scientific">Ornithodoros</name>
    <name type="common">relapsing fever ticks</name>
    <dbReference type="NCBI Taxonomy" id="6937"/>
</organismHost>
<organismHost>
    <name type="scientific">Phacochoerus aethiopicus</name>
    <name type="common">Warthog</name>
    <dbReference type="NCBI Taxonomy" id="85517"/>
</organismHost>
<organismHost>
    <name type="scientific">Phacochoerus africanus</name>
    <name type="common">Warthog</name>
    <dbReference type="NCBI Taxonomy" id="41426"/>
</organismHost>
<organismHost>
    <name type="scientific">Potamochoerus larvatus</name>
    <name type="common">Bushpig</name>
    <dbReference type="NCBI Taxonomy" id="273792"/>
</organismHost>
<organismHost>
    <name type="scientific">Sus scrofa</name>
    <name type="common">Pig</name>
    <dbReference type="NCBI Taxonomy" id="9823"/>
</organismHost>
<feature type="chain" id="PRO_0000373688" description="Uncharacterized protein E423R">
    <location>
        <begin position="1"/>
        <end position="423"/>
    </location>
</feature>
<keyword id="KW-0426">Late protein</keyword>
<keyword id="KW-0946">Virion</keyword>
<accession>P0CAH1</accession>
<comment type="subcellular location">
    <subcellularLocation>
        <location evidence="1">Virion</location>
    </subcellularLocation>
</comment>
<comment type="induction">
    <text evidence="2">Expressed in the late phase of the viral replicative cycle.</text>
</comment>
<comment type="similarity">
    <text evidence="2">Belongs to the asfivirus E423R family.</text>
</comment>